<reference key="1">
    <citation type="journal article" date="2009" name="J. Bacteriol.">
        <title>The complete genome sequence of Helicobacter pylori strain G27.</title>
        <authorList>
            <person name="Baltrus D.A."/>
            <person name="Amieva M.R."/>
            <person name="Covacci A."/>
            <person name="Lowe T.M."/>
            <person name="Merrell D.S."/>
            <person name="Ottemann K.M."/>
            <person name="Stein M."/>
            <person name="Salama N.R."/>
            <person name="Guillemin K."/>
        </authorList>
    </citation>
    <scope>NUCLEOTIDE SEQUENCE [LARGE SCALE GENOMIC DNA]</scope>
    <source>
        <strain>G27</strain>
    </source>
</reference>
<sequence length="360" mass="38793">MFVDSVEIIIASGKGGPGMVSFRREKFVIKGGPDGGDGGDGGDVYFEVDNNTDTLASFRGTKHHKAKNGAPGGTRNCAGKKGEDKIIVVPPGTQVFADDKLWLDLITPKERVLALKGGKGGLGNAHFKSATKQQPTYAQKGLEGVEKCVRLELKLIADIGLVGFPNAGKSTLISTISNAKPKIANYEFTTLVPNLGVVSVDEKSGFLMADIPGIIEGASEGKGLGISFLKHIERTKVLAFVLDASRLDLGIKEQYQRLRLELEKFSPALANKPFGVLLNKCDVVENIDEMAKDFCAFLNLEVQKLEAFDLEPYLGFLHPHLTSDFENDPNEKSALFVLPLSAVSALNTHALKFVLLKALP</sequence>
<dbReference type="EC" id="3.6.5.-" evidence="1"/>
<dbReference type="EMBL" id="CP001173">
    <property type="protein sequence ID" value="ACI27049.1"/>
    <property type="molecule type" value="Genomic_DNA"/>
</dbReference>
<dbReference type="RefSeq" id="WP_000497198.1">
    <property type="nucleotide sequence ID" value="NC_011333.1"/>
</dbReference>
<dbReference type="SMR" id="B5ZA69"/>
<dbReference type="KEGG" id="hpg:HPG27_282"/>
<dbReference type="HOGENOM" id="CLU_011747_2_0_7"/>
<dbReference type="Proteomes" id="UP000001735">
    <property type="component" value="Chromosome"/>
</dbReference>
<dbReference type="GO" id="GO:0005737">
    <property type="term" value="C:cytoplasm"/>
    <property type="evidence" value="ECO:0007669"/>
    <property type="project" value="UniProtKB-SubCell"/>
</dbReference>
<dbReference type="GO" id="GO:0005525">
    <property type="term" value="F:GTP binding"/>
    <property type="evidence" value="ECO:0007669"/>
    <property type="project" value="UniProtKB-UniRule"/>
</dbReference>
<dbReference type="GO" id="GO:0003924">
    <property type="term" value="F:GTPase activity"/>
    <property type="evidence" value="ECO:0007669"/>
    <property type="project" value="UniProtKB-UniRule"/>
</dbReference>
<dbReference type="GO" id="GO:0000287">
    <property type="term" value="F:magnesium ion binding"/>
    <property type="evidence" value="ECO:0007669"/>
    <property type="project" value="InterPro"/>
</dbReference>
<dbReference type="GO" id="GO:0042254">
    <property type="term" value="P:ribosome biogenesis"/>
    <property type="evidence" value="ECO:0007669"/>
    <property type="project" value="UniProtKB-UniRule"/>
</dbReference>
<dbReference type="CDD" id="cd01898">
    <property type="entry name" value="Obg"/>
    <property type="match status" value="1"/>
</dbReference>
<dbReference type="FunFam" id="2.70.210.12:FF:000001">
    <property type="entry name" value="GTPase Obg"/>
    <property type="match status" value="1"/>
</dbReference>
<dbReference type="Gene3D" id="2.70.210.12">
    <property type="entry name" value="GTP1/OBG domain"/>
    <property type="match status" value="1"/>
</dbReference>
<dbReference type="Gene3D" id="3.40.50.300">
    <property type="entry name" value="P-loop containing nucleotide triphosphate hydrolases"/>
    <property type="match status" value="1"/>
</dbReference>
<dbReference type="HAMAP" id="MF_01454">
    <property type="entry name" value="GTPase_Obg"/>
    <property type="match status" value="1"/>
</dbReference>
<dbReference type="InterPro" id="IPR031167">
    <property type="entry name" value="G_OBG"/>
</dbReference>
<dbReference type="InterPro" id="IPR006073">
    <property type="entry name" value="GTP-bd"/>
</dbReference>
<dbReference type="InterPro" id="IPR014100">
    <property type="entry name" value="GTP-bd_Obg/CgtA"/>
</dbReference>
<dbReference type="InterPro" id="IPR006074">
    <property type="entry name" value="GTP1-OBG_CS"/>
</dbReference>
<dbReference type="InterPro" id="IPR006169">
    <property type="entry name" value="GTP1_OBG_dom"/>
</dbReference>
<dbReference type="InterPro" id="IPR036726">
    <property type="entry name" value="GTP1_OBG_dom_sf"/>
</dbReference>
<dbReference type="InterPro" id="IPR045086">
    <property type="entry name" value="OBG_GTPase"/>
</dbReference>
<dbReference type="InterPro" id="IPR027417">
    <property type="entry name" value="P-loop_NTPase"/>
</dbReference>
<dbReference type="NCBIfam" id="TIGR02729">
    <property type="entry name" value="Obg_CgtA"/>
    <property type="match status" value="1"/>
</dbReference>
<dbReference type="NCBIfam" id="NF008955">
    <property type="entry name" value="PRK12297.1"/>
    <property type="match status" value="1"/>
</dbReference>
<dbReference type="NCBIfam" id="NF008956">
    <property type="entry name" value="PRK12299.1"/>
    <property type="match status" value="1"/>
</dbReference>
<dbReference type="PANTHER" id="PTHR11702">
    <property type="entry name" value="DEVELOPMENTALLY REGULATED GTP-BINDING PROTEIN-RELATED"/>
    <property type="match status" value="1"/>
</dbReference>
<dbReference type="PANTHER" id="PTHR11702:SF31">
    <property type="entry name" value="MITOCHONDRIAL RIBOSOME-ASSOCIATED GTPASE 2"/>
    <property type="match status" value="1"/>
</dbReference>
<dbReference type="Pfam" id="PF01018">
    <property type="entry name" value="GTP1_OBG"/>
    <property type="match status" value="1"/>
</dbReference>
<dbReference type="Pfam" id="PF01926">
    <property type="entry name" value="MMR_HSR1"/>
    <property type="match status" value="1"/>
</dbReference>
<dbReference type="PIRSF" id="PIRSF002401">
    <property type="entry name" value="GTP_bd_Obg/CgtA"/>
    <property type="match status" value="1"/>
</dbReference>
<dbReference type="PRINTS" id="PR00326">
    <property type="entry name" value="GTP1OBG"/>
</dbReference>
<dbReference type="SUPFAM" id="SSF82051">
    <property type="entry name" value="Obg GTP-binding protein N-terminal domain"/>
    <property type="match status" value="1"/>
</dbReference>
<dbReference type="SUPFAM" id="SSF52540">
    <property type="entry name" value="P-loop containing nucleoside triphosphate hydrolases"/>
    <property type="match status" value="1"/>
</dbReference>
<dbReference type="PROSITE" id="PS51710">
    <property type="entry name" value="G_OBG"/>
    <property type="match status" value="1"/>
</dbReference>
<dbReference type="PROSITE" id="PS00905">
    <property type="entry name" value="GTP1_OBG"/>
    <property type="match status" value="1"/>
</dbReference>
<dbReference type="PROSITE" id="PS51883">
    <property type="entry name" value="OBG"/>
    <property type="match status" value="1"/>
</dbReference>
<feature type="chain" id="PRO_0000385973" description="GTPase Obg">
    <location>
        <begin position="1"/>
        <end position="360"/>
    </location>
</feature>
<feature type="domain" description="Obg" evidence="2">
    <location>
        <begin position="1"/>
        <end position="156"/>
    </location>
</feature>
<feature type="domain" description="OBG-type G" evidence="1">
    <location>
        <begin position="157"/>
        <end position="360"/>
    </location>
</feature>
<feature type="binding site" evidence="1">
    <location>
        <begin position="163"/>
        <end position="170"/>
    </location>
    <ligand>
        <name>GTP</name>
        <dbReference type="ChEBI" id="CHEBI:37565"/>
    </ligand>
</feature>
<feature type="binding site" evidence="1">
    <location>
        <position position="170"/>
    </location>
    <ligand>
        <name>Mg(2+)</name>
        <dbReference type="ChEBI" id="CHEBI:18420"/>
    </ligand>
</feature>
<feature type="binding site" evidence="1">
    <location>
        <begin position="188"/>
        <end position="192"/>
    </location>
    <ligand>
        <name>GTP</name>
        <dbReference type="ChEBI" id="CHEBI:37565"/>
    </ligand>
</feature>
<feature type="binding site" evidence="1">
    <location>
        <position position="190"/>
    </location>
    <ligand>
        <name>Mg(2+)</name>
        <dbReference type="ChEBI" id="CHEBI:18420"/>
    </ligand>
</feature>
<feature type="binding site" evidence="1">
    <location>
        <begin position="210"/>
        <end position="213"/>
    </location>
    <ligand>
        <name>GTP</name>
        <dbReference type="ChEBI" id="CHEBI:37565"/>
    </ligand>
</feature>
<feature type="binding site" evidence="1">
    <location>
        <begin position="279"/>
        <end position="282"/>
    </location>
    <ligand>
        <name>GTP</name>
        <dbReference type="ChEBI" id="CHEBI:37565"/>
    </ligand>
</feature>
<feature type="binding site" evidence="1">
    <location>
        <begin position="341"/>
        <end position="343"/>
    </location>
    <ligand>
        <name>GTP</name>
        <dbReference type="ChEBI" id="CHEBI:37565"/>
    </ligand>
</feature>
<accession>B5ZA69</accession>
<comment type="function">
    <text evidence="1">An essential GTPase which binds GTP, GDP and possibly (p)ppGpp with moderate affinity, with high nucleotide exchange rates and a fairly low GTP hydrolysis rate. Plays a role in control of the cell cycle, stress response, ribosome biogenesis and in those bacteria that undergo differentiation, in morphogenesis control.</text>
</comment>
<comment type="cofactor">
    <cofactor evidence="1">
        <name>Mg(2+)</name>
        <dbReference type="ChEBI" id="CHEBI:18420"/>
    </cofactor>
</comment>
<comment type="subunit">
    <text evidence="1">Monomer.</text>
</comment>
<comment type="subcellular location">
    <subcellularLocation>
        <location evidence="1">Cytoplasm</location>
    </subcellularLocation>
</comment>
<comment type="similarity">
    <text evidence="1">Belongs to the TRAFAC class OBG-HflX-like GTPase superfamily. OBG GTPase family.</text>
</comment>
<protein>
    <recommendedName>
        <fullName evidence="1">GTPase Obg</fullName>
        <ecNumber evidence="1">3.6.5.-</ecNumber>
    </recommendedName>
    <alternativeName>
        <fullName evidence="1">GTP-binding protein Obg</fullName>
    </alternativeName>
</protein>
<name>OBG_HELPG</name>
<proteinExistence type="inferred from homology"/>
<evidence type="ECO:0000255" key="1">
    <source>
        <dbReference type="HAMAP-Rule" id="MF_01454"/>
    </source>
</evidence>
<evidence type="ECO:0000255" key="2">
    <source>
        <dbReference type="PROSITE-ProRule" id="PRU01231"/>
    </source>
</evidence>
<gene>
    <name evidence="1" type="primary">obg</name>
    <name type="ordered locus">HPG27_282</name>
</gene>
<organism>
    <name type="scientific">Helicobacter pylori (strain G27)</name>
    <dbReference type="NCBI Taxonomy" id="563041"/>
    <lineage>
        <taxon>Bacteria</taxon>
        <taxon>Pseudomonadati</taxon>
        <taxon>Campylobacterota</taxon>
        <taxon>Epsilonproteobacteria</taxon>
        <taxon>Campylobacterales</taxon>
        <taxon>Helicobacteraceae</taxon>
        <taxon>Helicobacter</taxon>
    </lineage>
</organism>
<keyword id="KW-0963">Cytoplasm</keyword>
<keyword id="KW-0342">GTP-binding</keyword>
<keyword id="KW-0378">Hydrolase</keyword>
<keyword id="KW-0460">Magnesium</keyword>
<keyword id="KW-0479">Metal-binding</keyword>
<keyword id="KW-0547">Nucleotide-binding</keyword>
<keyword id="KW-1185">Reference proteome</keyword>